<name>Y1085_BIFLS</name>
<comment type="function">
    <text evidence="1">Displays ATPase and GTPase activities.</text>
</comment>
<comment type="similarity">
    <text evidence="1">Belongs to the RapZ-like family.</text>
</comment>
<evidence type="ECO:0000255" key="1">
    <source>
        <dbReference type="HAMAP-Rule" id="MF_00636"/>
    </source>
</evidence>
<evidence type="ECO:0000256" key="2">
    <source>
        <dbReference type="SAM" id="MobiDB-lite"/>
    </source>
</evidence>
<organism>
    <name type="scientific">Bifidobacterium longum subsp. infantis (strain ATCC 15697 / DSM 20088 / JCM 1222 / NCTC 11817 / S12)</name>
    <dbReference type="NCBI Taxonomy" id="391904"/>
    <lineage>
        <taxon>Bacteria</taxon>
        <taxon>Bacillati</taxon>
        <taxon>Actinomycetota</taxon>
        <taxon>Actinomycetes</taxon>
        <taxon>Bifidobacteriales</taxon>
        <taxon>Bifidobacteriaceae</taxon>
        <taxon>Bifidobacterium</taxon>
    </lineage>
</organism>
<dbReference type="EMBL" id="CP001095">
    <property type="protein sequence ID" value="ACJ52175.1"/>
    <property type="molecule type" value="Genomic_DNA"/>
</dbReference>
<dbReference type="EMBL" id="AP010889">
    <property type="protein sequence ID" value="BAJ68697.1"/>
    <property type="molecule type" value="Genomic_DNA"/>
</dbReference>
<dbReference type="SMR" id="B7GQU5"/>
<dbReference type="KEGG" id="bln:Blon_1085"/>
<dbReference type="KEGG" id="blon:BLIJ_1109"/>
<dbReference type="PATRIC" id="fig|391904.8.peg.1108"/>
<dbReference type="HOGENOM" id="CLU_059558_0_0_11"/>
<dbReference type="Proteomes" id="UP000001360">
    <property type="component" value="Chromosome"/>
</dbReference>
<dbReference type="GO" id="GO:0005524">
    <property type="term" value="F:ATP binding"/>
    <property type="evidence" value="ECO:0007669"/>
    <property type="project" value="UniProtKB-UniRule"/>
</dbReference>
<dbReference type="GO" id="GO:0005525">
    <property type="term" value="F:GTP binding"/>
    <property type="evidence" value="ECO:0007669"/>
    <property type="project" value="UniProtKB-UniRule"/>
</dbReference>
<dbReference type="Gene3D" id="3.40.50.300">
    <property type="entry name" value="P-loop containing nucleotide triphosphate hydrolases"/>
    <property type="match status" value="1"/>
</dbReference>
<dbReference type="HAMAP" id="MF_00636">
    <property type="entry name" value="RapZ_like"/>
    <property type="match status" value="1"/>
</dbReference>
<dbReference type="InterPro" id="IPR027417">
    <property type="entry name" value="P-loop_NTPase"/>
</dbReference>
<dbReference type="InterPro" id="IPR005337">
    <property type="entry name" value="RapZ-like"/>
</dbReference>
<dbReference type="InterPro" id="IPR053930">
    <property type="entry name" value="RapZ-like_N"/>
</dbReference>
<dbReference type="InterPro" id="IPR053931">
    <property type="entry name" value="RapZ_C"/>
</dbReference>
<dbReference type="NCBIfam" id="NF003828">
    <property type="entry name" value="PRK05416.1"/>
    <property type="match status" value="1"/>
</dbReference>
<dbReference type="PANTHER" id="PTHR30448">
    <property type="entry name" value="RNASE ADAPTER PROTEIN RAPZ"/>
    <property type="match status" value="1"/>
</dbReference>
<dbReference type="PANTHER" id="PTHR30448:SF0">
    <property type="entry name" value="RNASE ADAPTER PROTEIN RAPZ"/>
    <property type="match status" value="1"/>
</dbReference>
<dbReference type="Pfam" id="PF22740">
    <property type="entry name" value="PapZ_C"/>
    <property type="match status" value="1"/>
</dbReference>
<dbReference type="Pfam" id="PF03668">
    <property type="entry name" value="RapZ-like_N"/>
    <property type="match status" value="1"/>
</dbReference>
<dbReference type="PIRSF" id="PIRSF005052">
    <property type="entry name" value="P-loopkin"/>
    <property type="match status" value="1"/>
</dbReference>
<dbReference type="SUPFAM" id="SSF52540">
    <property type="entry name" value="P-loop containing nucleoside triphosphate hydrolases"/>
    <property type="match status" value="1"/>
</dbReference>
<gene>
    <name type="ordered locus">Blon_1085</name>
    <name type="ordered locus">BLIJ_1109</name>
</gene>
<keyword id="KW-0067">ATP-binding</keyword>
<keyword id="KW-0342">GTP-binding</keyword>
<keyword id="KW-0547">Nucleotide-binding</keyword>
<reference key="1">
    <citation type="journal article" date="2008" name="Proc. Natl. Acad. Sci. U.S.A.">
        <title>The genome sequence of Bifidobacterium longum subsp. infantis reveals adaptations for milk utilization within the infant microbiome.</title>
        <authorList>
            <person name="Sela D.A."/>
            <person name="Chapman J."/>
            <person name="Adeuya A."/>
            <person name="Kim J.H."/>
            <person name="Chen F."/>
            <person name="Whitehead T.R."/>
            <person name="Lapidus A."/>
            <person name="Rokhsar D.S."/>
            <person name="Lebrilla C.B."/>
            <person name="German J.B."/>
            <person name="Price N.P."/>
            <person name="Richardson P.M."/>
            <person name="Mills D.A."/>
        </authorList>
    </citation>
    <scope>NUCLEOTIDE SEQUENCE [LARGE SCALE GENOMIC DNA]</scope>
    <source>
        <strain>ATCC 15697 / DSM 20088 / JCM 1222 / NCTC 11817 / S12</strain>
    </source>
</reference>
<reference key="2">
    <citation type="journal article" date="2011" name="Nature">
        <title>Bifidobacteria can protect from enteropathogenic infection through production of acetate.</title>
        <authorList>
            <person name="Fukuda S."/>
            <person name="Toh H."/>
            <person name="Hase K."/>
            <person name="Oshima K."/>
            <person name="Nakanishi Y."/>
            <person name="Yoshimura K."/>
            <person name="Tobe T."/>
            <person name="Clarke J.M."/>
            <person name="Topping D.L."/>
            <person name="Suzuki T."/>
            <person name="Taylor T.D."/>
            <person name="Itoh K."/>
            <person name="Kikuchi J."/>
            <person name="Morita H."/>
            <person name="Hattori M."/>
            <person name="Ohno H."/>
        </authorList>
    </citation>
    <scope>NUCLEOTIDE SEQUENCE [LARGE SCALE GENOMIC DNA]</scope>
    <source>
        <strain>ATCC 15697 / DSM 20088 / JCM 1222 / NCTC 11817 / S12</strain>
    </source>
</reference>
<feature type="chain" id="PRO_0000383219" description="Nucleotide-binding protein Blon_1085/BLIJ_1109">
    <location>
        <begin position="1"/>
        <end position="328"/>
    </location>
</feature>
<feature type="region of interest" description="Disordered" evidence="2">
    <location>
        <begin position="1"/>
        <end position="33"/>
    </location>
</feature>
<feature type="compositionally biased region" description="Low complexity" evidence="2">
    <location>
        <begin position="13"/>
        <end position="29"/>
    </location>
</feature>
<feature type="binding site" evidence="1">
    <location>
        <begin position="46"/>
        <end position="53"/>
    </location>
    <ligand>
        <name>ATP</name>
        <dbReference type="ChEBI" id="CHEBI:30616"/>
    </ligand>
</feature>
<feature type="binding site" evidence="1">
    <location>
        <begin position="101"/>
        <end position="104"/>
    </location>
    <ligand>
        <name>GTP</name>
        <dbReference type="ChEBI" id="CHEBI:37565"/>
    </ligand>
</feature>
<sequence>MSQQTTIRDTGEAAATNAPANSATSTSTPDNQPTPLDAFEVLLITGMSGAGRSHAADCVEDMGWYVVDNLPPKLLIPLVDMMTTSGSGSGSGVHKLAAVIDVRSSYFDELAAVLGHLDDLGVKTHILFLDASNEVLIKRYESVRRPHPLQHGNRLIDGILEERHLLEDLKERADWVIDTSSLSIHQLSTKLYETMLGSGPTTVAVHIFSFGFKYGMPIDADFVADVRFLPNPFWVPNLRELTGHDKPVADYVLSSKGAKEFLDAYEKAIEIALEGYAQEDKHYVTIAVGCTGGQHRSVAMSEELARRLRAHGLNVTVSAREQHKRHSS</sequence>
<proteinExistence type="inferred from homology"/>
<protein>
    <recommendedName>
        <fullName evidence="1">Nucleotide-binding protein Blon_1085/BLIJ_1109</fullName>
    </recommendedName>
</protein>
<accession>B7GQU5</accession>
<accession>E8MJH0</accession>